<gene>
    <name type="primary">HBG</name>
</gene>
<accession>P68069</accession>
<accession>P06891</accession>
<comment type="function">
    <text>Gamma chains make up the fetal hemoglobin F, in combination with alpha chains.</text>
</comment>
<comment type="subunit">
    <text>Heterotetramer of two alpha chains and two gamma chains in fetal hemoglobin (Hb F).</text>
</comment>
<comment type="tissue specificity">
    <text>Red blood cells.</text>
</comment>
<comment type="similarity">
    <text evidence="1">Belongs to the globin family.</text>
</comment>
<proteinExistence type="evidence at transcript level"/>
<evidence type="ECO:0000255" key="1">
    <source>
        <dbReference type="PROSITE-ProRule" id="PRU00238"/>
    </source>
</evidence>
<protein>
    <recommendedName>
        <fullName>Hemoglobin subunit gamma</fullName>
    </recommendedName>
    <alternativeName>
        <fullName>Gamma-globin</fullName>
    </alternativeName>
    <alternativeName>
        <fullName>Hemoglobin gamma chain</fullName>
    </alternativeName>
</protein>
<feature type="chain" id="PRO_0000053238" description="Hemoglobin subunit gamma">
    <location>
        <begin position="1"/>
        <end position="147"/>
    </location>
</feature>
<feature type="domain" description="Globin" evidence="1">
    <location>
        <begin position="3"/>
        <end position="147"/>
    </location>
</feature>
<feature type="binding site" description="distal binding residue" evidence="1">
    <location>
        <position position="64"/>
    </location>
    <ligand>
        <name>heme b</name>
        <dbReference type="ChEBI" id="CHEBI:60344"/>
    </ligand>
    <ligandPart>
        <name>Fe</name>
        <dbReference type="ChEBI" id="CHEBI:18248"/>
    </ligandPart>
</feature>
<feature type="binding site" description="proximal binding residue" evidence="1">
    <location>
        <position position="93"/>
    </location>
    <ligand>
        <name>heme b</name>
        <dbReference type="ChEBI" id="CHEBI:60344"/>
    </ligand>
    <ligandPart>
        <name>Fe</name>
        <dbReference type="ChEBI" id="CHEBI:18248"/>
    </ligandPart>
</feature>
<name>HBG_ATEPA</name>
<reference key="1">
    <citation type="journal article" date="1999" name="Mol. Phylogenet. Evol.">
        <title>Molecular phylogeny of ateline new world monkeys (Platyrrhini, atelinae) based on gamma-globin gene sequences: evidence that Brachyteles is the sister group of Lagothrix.</title>
        <authorList>
            <person name="Meireles C.M."/>
            <person name="Czelusniak J."/>
            <person name="Schneider M.P.C."/>
            <person name="Muniz J.A.P.C."/>
            <person name="Brigido M.C."/>
            <person name="Ferreira H.S."/>
            <person name="Goodman M."/>
        </authorList>
    </citation>
    <scope>NUCLEOTIDE SEQUENCE [GENOMIC DNA]</scope>
</reference>
<organism>
    <name type="scientific">Ateles paniscus</name>
    <name type="common">Black spider monkey</name>
    <name type="synonym">Red-faced black spider monkey</name>
    <dbReference type="NCBI Taxonomy" id="9510"/>
    <lineage>
        <taxon>Eukaryota</taxon>
        <taxon>Metazoa</taxon>
        <taxon>Chordata</taxon>
        <taxon>Craniata</taxon>
        <taxon>Vertebrata</taxon>
        <taxon>Euteleostomi</taxon>
        <taxon>Mammalia</taxon>
        <taxon>Eutheria</taxon>
        <taxon>Euarchontoglires</taxon>
        <taxon>Primates</taxon>
        <taxon>Haplorrhini</taxon>
        <taxon>Platyrrhini</taxon>
        <taxon>Atelidae</taxon>
        <taxon>Atelinae</taxon>
        <taxon>Ateles</taxon>
    </lineage>
</organism>
<dbReference type="EMBL" id="AF030093">
    <property type="protein sequence ID" value="AAB92227.1"/>
    <property type="molecule type" value="Genomic_DNA"/>
</dbReference>
<dbReference type="SMR" id="P68069"/>
<dbReference type="GO" id="GO:0072562">
    <property type="term" value="C:blood microparticle"/>
    <property type="evidence" value="ECO:0007669"/>
    <property type="project" value="TreeGrafter"/>
</dbReference>
<dbReference type="GO" id="GO:0031838">
    <property type="term" value="C:haptoglobin-hemoglobin complex"/>
    <property type="evidence" value="ECO:0007669"/>
    <property type="project" value="TreeGrafter"/>
</dbReference>
<dbReference type="GO" id="GO:0005833">
    <property type="term" value="C:hemoglobin complex"/>
    <property type="evidence" value="ECO:0007669"/>
    <property type="project" value="InterPro"/>
</dbReference>
<dbReference type="GO" id="GO:0031720">
    <property type="term" value="F:haptoglobin binding"/>
    <property type="evidence" value="ECO:0007669"/>
    <property type="project" value="TreeGrafter"/>
</dbReference>
<dbReference type="GO" id="GO:0020037">
    <property type="term" value="F:heme binding"/>
    <property type="evidence" value="ECO:0007669"/>
    <property type="project" value="InterPro"/>
</dbReference>
<dbReference type="GO" id="GO:0031721">
    <property type="term" value="F:hemoglobin alpha binding"/>
    <property type="evidence" value="ECO:0007669"/>
    <property type="project" value="TreeGrafter"/>
</dbReference>
<dbReference type="GO" id="GO:0046872">
    <property type="term" value="F:metal ion binding"/>
    <property type="evidence" value="ECO:0007669"/>
    <property type="project" value="UniProtKB-KW"/>
</dbReference>
<dbReference type="GO" id="GO:0043177">
    <property type="term" value="F:organic acid binding"/>
    <property type="evidence" value="ECO:0007669"/>
    <property type="project" value="TreeGrafter"/>
</dbReference>
<dbReference type="GO" id="GO:0019825">
    <property type="term" value="F:oxygen binding"/>
    <property type="evidence" value="ECO:0007669"/>
    <property type="project" value="InterPro"/>
</dbReference>
<dbReference type="GO" id="GO:0005344">
    <property type="term" value="F:oxygen carrier activity"/>
    <property type="evidence" value="ECO:0007669"/>
    <property type="project" value="UniProtKB-KW"/>
</dbReference>
<dbReference type="GO" id="GO:0004601">
    <property type="term" value="F:peroxidase activity"/>
    <property type="evidence" value="ECO:0007669"/>
    <property type="project" value="TreeGrafter"/>
</dbReference>
<dbReference type="GO" id="GO:0042744">
    <property type="term" value="P:hydrogen peroxide catabolic process"/>
    <property type="evidence" value="ECO:0007669"/>
    <property type="project" value="TreeGrafter"/>
</dbReference>
<dbReference type="CDD" id="cd08925">
    <property type="entry name" value="Hb-beta-like"/>
    <property type="match status" value="1"/>
</dbReference>
<dbReference type="FunFam" id="1.10.490.10:FF:000001">
    <property type="entry name" value="Hemoglobin subunit beta"/>
    <property type="match status" value="1"/>
</dbReference>
<dbReference type="Gene3D" id="1.10.490.10">
    <property type="entry name" value="Globins"/>
    <property type="match status" value="1"/>
</dbReference>
<dbReference type="InterPro" id="IPR000971">
    <property type="entry name" value="Globin"/>
</dbReference>
<dbReference type="InterPro" id="IPR009050">
    <property type="entry name" value="Globin-like_sf"/>
</dbReference>
<dbReference type="InterPro" id="IPR012292">
    <property type="entry name" value="Globin/Proto"/>
</dbReference>
<dbReference type="InterPro" id="IPR002337">
    <property type="entry name" value="Hemoglobin_b"/>
</dbReference>
<dbReference type="InterPro" id="IPR050056">
    <property type="entry name" value="Hemoglobin_oxygen_transport"/>
</dbReference>
<dbReference type="PANTHER" id="PTHR11442">
    <property type="entry name" value="HEMOGLOBIN FAMILY MEMBER"/>
    <property type="match status" value="1"/>
</dbReference>
<dbReference type="PANTHER" id="PTHR11442:SF52">
    <property type="entry name" value="HEMOGLOBIN SUBUNIT GAMMA-1"/>
    <property type="match status" value="1"/>
</dbReference>
<dbReference type="Pfam" id="PF00042">
    <property type="entry name" value="Globin"/>
    <property type="match status" value="1"/>
</dbReference>
<dbReference type="PRINTS" id="PR00814">
    <property type="entry name" value="BETAHAEM"/>
</dbReference>
<dbReference type="SUPFAM" id="SSF46458">
    <property type="entry name" value="Globin-like"/>
    <property type="match status" value="1"/>
</dbReference>
<dbReference type="PROSITE" id="PS01033">
    <property type="entry name" value="GLOBIN"/>
    <property type="match status" value="1"/>
</dbReference>
<sequence length="147" mass="15940">MSNFTAEDKAAITSLWGKVNVEDAGGETLGRLLVVYPWTQRFFDSFGSLSSPSAIMGNPKVKAHGVKVLTSLGEAIKNLDDLKGTFGQLSELHCDKLHVDPENFRLLGNVLVTVLAILHGKEFTPEVQASWQKMVAGVASALASRYH</sequence>
<keyword id="KW-0349">Heme</keyword>
<keyword id="KW-0408">Iron</keyword>
<keyword id="KW-0479">Metal-binding</keyword>
<keyword id="KW-0561">Oxygen transport</keyword>
<keyword id="KW-0813">Transport</keyword>